<comment type="function">
    <text>Probable transcription factor which exert its primary action widely during early neural development and in a very limited set of neurons in the mature brain.</text>
</comment>
<comment type="subunit">
    <text evidence="8">Interacts with HNRNPU.</text>
</comment>
<comment type="subcellular location">
    <subcellularLocation>
        <location>Nucleus</location>
    </subcellularLocation>
</comment>
<comment type="tissue specificity">
    <text>Brain specific.</text>
</comment>
<comment type="disease" evidence="6 7 9 10">
    <disease id="DI-02441">
        <name>Deafness, X-linked, 2</name>
        <acronym>DFNX2</acronym>
        <description>A form of deafness characterized by both conductive hearing loss resulting from stapes (perilymphatic gusher) fixation, and progressive sensorineural deafness.</description>
        <dbReference type="MIM" id="304400"/>
    </disease>
    <text>The disease is caused by variants affecting the gene represented in this entry.</text>
</comment>
<comment type="similarity">
    <text evidence="11">Belongs to the POU transcription factor family. Class-3 subfamily.</text>
</comment>
<comment type="online information" name="Hereditary hearing loss homepage">
    <link uri="https://hereditaryhearingloss.org/sex-linked"/>
    <text>Gene page</text>
</comment>
<accession>P49335</accession>
<accession>B2RC71</accession>
<accession>Q5H9G9</accession>
<accession>Q99410</accession>
<evidence type="ECO:0000250" key="1">
    <source>
        <dbReference type="UniProtKB" id="P20265"/>
    </source>
</evidence>
<evidence type="ECO:0000255" key="2">
    <source>
        <dbReference type="PROSITE-ProRule" id="PRU00108"/>
    </source>
</evidence>
<evidence type="ECO:0000255" key="3">
    <source>
        <dbReference type="PROSITE-ProRule" id="PRU00530"/>
    </source>
</evidence>
<evidence type="ECO:0000256" key="4">
    <source>
        <dbReference type="SAM" id="MobiDB-lite"/>
    </source>
</evidence>
<evidence type="ECO:0000269" key="5">
    <source>
    </source>
</evidence>
<evidence type="ECO:0000269" key="6">
    <source>
    </source>
</evidence>
<evidence type="ECO:0000269" key="7">
    <source>
    </source>
</evidence>
<evidence type="ECO:0000269" key="8">
    <source>
    </source>
</evidence>
<evidence type="ECO:0000269" key="9">
    <source>
    </source>
</evidence>
<evidence type="ECO:0000269" key="10">
    <source>
    </source>
</evidence>
<evidence type="ECO:0000305" key="11"/>
<name>PO3F4_HUMAN</name>
<sequence>MATAASNPYSILSSTSLVHADSAGMQQGSPFRNPQKLLQSDYLQGVPSNGHPLGHHWVTSLSDGGPWSSTLATSPLDQQDVKPGREDLQLGAIIHHRSPHVAHHSPHTNHPNAWGASPAPNPSITSSGQPLNVYSQPGFTVSGMLEHGGLTPPPAAASAQSLHPVLREPPDHGELGSHHCQDHSDEETPTSDELEQFAKQFKQRRIKLGFTQADVGLALGTLYGNVFSQTTICRFEGLQLSFKNMCKLKPLLNKWLEEADSSTGSPTSIDKIAAQGRKRKKRTSIEVSVKGVLETHFLKCPKPAAQEISSLADSLQLEKEVVRVWFCNRRQKEKRMTPPGDQQPHEVYSHTVKTDTSCHDL</sequence>
<feature type="chain" id="PRO_0000100732" description="POU domain, class 3, transcription factor 4">
    <location>
        <begin position="1"/>
        <end position="361"/>
    </location>
</feature>
<feature type="domain" description="POU-specific" evidence="3">
    <location>
        <begin position="186"/>
        <end position="260"/>
    </location>
</feature>
<feature type="DNA-binding region" description="Homeobox" evidence="2">
    <location>
        <begin position="278"/>
        <end position="337"/>
    </location>
</feature>
<feature type="region of interest" description="Disordered" evidence="4">
    <location>
        <begin position="99"/>
        <end position="131"/>
    </location>
</feature>
<feature type="region of interest" description="Disordered" evidence="4">
    <location>
        <begin position="144"/>
        <end position="192"/>
    </location>
</feature>
<feature type="compositionally biased region" description="Polar residues" evidence="4">
    <location>
        <begin position="122"/>
        <end position="131"/>
    </location>
</feature>
<feature type="compositionally biased region" description="Basic and acidic residues" evidence="4">
    <location>
        <begin position="165"/>
        <end position="183"/>
    </location>
</feature>
<feature type="modified residue" description="Phosphoserine" evidence="1">
    <location>
        <position position="265"/>
    </location>
</feature>
<feature type="sequence variant" id="VAR_015261" description="In DFNX2." evidence="10">
    <location>
        <begin position="201"/>
        <end position="202"/>
    </location>
</feature>
<feature type="sequence variant" id="VAR_067431" description="In dbSNP:rs5921979." evidence="5 7">
    <original>G</original>
    <variation>A</variation>
    <location>
        <position position="237"/>
    </location>
</feature>
<feature type="sequence variant" id="VAR_003782" description="In DFNX2; dbSNP:rs387906502." evidence="6">
    <original>A</original>
    <variation>V</variation>
    <location>
        <position position="312"/>
    </location>
</feature>
<feature type="sequence variant" id="VAR_003783" description="In DFNX2; dbSNP:rs104894921." evidence="7">
    <original>L</original>
    <variation>W</variation>
    <location>
        <position position="317"/>
    </location>
</feature>
<feature type="sequence variant" id="VAR_003784" description="In DFNX2; somatic mosaicism in 50% of the peripheral blood lymphocytes; dbSNP:rs104894924." evidence="9">
    <original>R</original>
    <variation>G</variation>
    <location>
        <position position="323"/>
    </location>
</feature>
<feature type="sequence variant" id="VAR_003785" description="In DFNX2; dbSNP:rs104894923." evidence="9">
    <original>R</original>
    <variation>S</variation>
    <location>
        <position position="330"/>
    </location>
</feature>
<feature type="sequence variant" id="VAR_003786" description="In DFNX2; dbSNP:rs104894922." evidence="7">
    <original>K</original>
    <variation>E</variation>
    <location>
        <position position="334"/>
    </location>
</feature>
<reference key="1">
    <citation type="journal article" date="1995" name="Science">
        <title>Association between X-linked mixed deafness and mutations in the POU domain gene POU3F4.</title>
        <authorList>
            <person name="de Kok Y.J.M."/>
            <person name="van der Maarel S.M."/>
            <person name="Bitner-Glindzicz M."/>
            <person name="Huber I."/>
            <person name="Monaco A.P."/>
            <person name="Malcolm S."/>
            <person name="Pembrey M.E."/>
            <person name="Ropers H.-H."/>
            <person name="Cremers F.P.M."/>
        </authorList>
    </citation>
    <scope>NUCLEOTIDE SEQUENCE [MRNA]</scope>
    <scope>VARIANT ALA-237</scope>
    <scope>VARIANTS DFNX2 TRP-317 AND GLU-334</scope>
    <source>
        <tissue>Brain</tissue>
    </source>
</reference>
<reference key="2">
    <citation type="journal article" date="2004" name="Nat. Genet.">
        <title>Complete sequencing and characterization of 21,243 full-length human cDNAs.</title>
        <authorList>
            <person name="Ota T."/>
            <person name="Suzuki Y."/>
            <person name="Nishikawa T."/>
            <person name="Otsuki T."/>
            <person name="Sugiyama T."/>
            <person name="Irie R."/>
            <person name="Wakamatsu A."/>
            <person name="Hayashi K."/>
            <person name="Sato H."/>
            <person name="Nagai K."/>
            <person name="Kimura K."/>
            <person name="Makita H."/>
            <person name="Sekine M."/>
            <person name="Obayashi M."/>
            <person name="Nishi T."/>
            <person name="Shibahara T."/>
            <person name="Tanaka T."/>
            <person name="Ishii S."/>
            <person name="Yamamoto J."/>
            <person name="Saito K."/>
            <person name="Kawai Y."/>
            <person name="Isono Y."/>
            <person name="Nakamura Y."/>
            <person name="Nagahari K."/>
            <person name="Murakami K."/>
            <person name="Yasuda T."/>
            <person name="Iwayanagi T."/>
            <person name="Wagatsuma M."/>
            <person name="Shiratori A."/>
            <person name="Sudo H."/>
            <person name="Hosoiri T."/>
            <person name="Kaku Y."/>
            <person name="Kodaira H."/>
            <person name="Kondo H."/>
            <person name="Sugawara M."/>
            <person name="Takahashi M."/>
            <person name="Kanda K."/>
            <person name="Yokoi T."/>
            <person name="Furuya T."/>
            <person name="Kikkawa E."/>
            <person name="Omura Y."/>
            <person name="Abe K."/>
            <person name="Kamihara K."/>
            <person name="Katsuta N."/>
            <person name="Sato K."/>
            <person name="Tanikawa M."/>
            <person name="Yamazaki M."/>
            <person name="Ninomiya K."/>
            <person name="Ishibashi T."/>
            <person name="Yamashita H."/>
            <person name="Murakawa K."/>
            <person name="Fujimori K."/>
            <person name="Tanai H."/>
            <person name="Kimata M."/>
            <person name="Watanabe M."/>
            <person name="Hiraoka S."/>
            <person name="Chiba Y."/>
            <person name="Ishida S."/>
            <person name="Ono Y."/>
            <person name="Takiguchi S."/>
            <person name="Watanabe S."/>
            <person name="Yosida M."/>
            <person name="Hotuta T."/>
            <person name="Kusano J."/>
            <person name="Kanehori K."/>
            <person name="Takahashi-Fujii A."/>
            <person name="Hara H."/>
            <person name="Tanase T.-O."/>
            <person name="Nomura Y."/>
            <person name="Togiya S."/>
            <person name="Komai F."/>
            <person name="Hara R."/>
            <person name="Takeuchi K."/>
            <person name="Arita M."/>
            <person name="Imose N."/>
            <person name="Musashino K."/>
            <person name="Yuuki H."/>
            <person name="Oshima A."/>
            <person name="Sasaki N."/>
            <person name="Aotsuka S."/>
            <person name="Yoshikawa Y."/>
            <person name="Matsunawa H."/>
            <person name="Ichihara T."/>
            <person name="Shiohata N."/>
            <person name="Sano S."/>
            <person name="Moriya S."/>
            <person name="Momiyama H."/>
            <person name="Satoh N."/>
            <person name="Takami S."/>
            <person name="Terashima Y."/>
            <person name="Suzuki O."/>
            <person name="Nakagawa S."/>
            <person name="Senoh A."/>
            <person name="Mizoguchi H."/>
            <person name="Goto Y."/>
            <person name="Shimizu F."/>
            <person name="Wakebe H."/>
            <person name="Hishigaki H."/>
            <person name="Watanabe T."/>
            <person name="Sugiyama A."/>
            <person name="Takemoto M."/>
            <person name="Kawakami B."/>
            <person name="Yamazaki M."/>
            <person name="Watanabe K."/>
            <person name="Kumagai A."/>
            <person name="Itakura S."/>
            <person name="Fukuzumi Y."/>
            <person name="Fujimori Y."/>
            <person name="Komiyama M."/>
            <person name="Tashiro H."/>
            <person name="Tanigami A."/>
            <person name="Fujiwara T."/>
            <person name="Ono T."/>
            <person name="Yamada K."/>
            <person name="Fujii Y."/>
            <person name="Ozaki K."/>
            <person name="Hirao M."/>
            <person name="Ohmori Y."/>
            <person name="Kawabata A."/>
            <person name="Hikiji T."/>
            <person name="Kobatake N."/>
            <person name="Inagaki H."/>
            <person name="Ikema Y."/>
            <person name="Okamoto S."/>
            <person name="Okitani R."/>
            <person name="Kawakami T."/>
            <person name="Noguchi S."/>
            <person name="Itoh T."/>
            <person name="Shigeta K."/>
            <person name="Senba T."/>
            <person name="Matsumura K."/>
            <person name="Nakajima Y."/>
            <person name="Mizuno T."/>
            <person name="Morinaga M."/>
            <person name="Sasaki M."/>
            <person name="Togashi T."/>
            <person name="Oyama M."/>
            <person name="Hata H."/>
            <person name="Watanabe M."/>
            <person name="Komatsu T."/>
            <person name="Mizushima-Sugano J."/>
            <person name="Satoh T."/>
            <person name="Shirai Y."/>
            <person name="Takahashi Y."/>
            <person name="Nakagawa K."/>
            <person name="Okumura K."/>
            <person name="Nagase T."/>
            <person name="Nomura N."/>
            <person name="Kikuchi H."/>
            <person name="Masuho Y."/>
            <person name="Yamashita R."/>
            <person name="Nakai K."/>
            <person name="Yada T."/>
            <person name="Nakamura Y."/>
            <person name="Ohara O."/>
            <person name="Isogai T."/>
            <person name="Sugano S."/>
        </authorList>
    </citation>
    <scope>NUCLEOTIDE SEQUENCE [LARGE SCALE MRNA]</scope>
    <scope>VARIANT ALA-237</scope>
    <source>
        <tissue>Brain</tissue>
    </source>
</reference>
<reference key="3">
    <citation type="journal article" date="2005" name="Nature">
        <title>The DNA sequence of the human X chromosome.</title>
        <authorList>
            <person name="Ross M.T."/>
            <person name="Grafham D.V."/>
            <person name="Coffey A.J."/>
            <person name="Scherer S."/>
            <person name="McLay K."/>
            <person name="Muzny D."/>
            <person name="Platzer M."/>
            <person name="Howell G.R."/>
            <person name="Burrows C."/>
            <person name="Bird C.P."/>
            <person name="Frankish A."/>
            <person name="Lovell F.L."/>
            <person name="Howe K.L."/>
            <person name="Ashurst J.L."/>
            <person name="Fulton R.S."/>
            <person name="Sudbrak R."/>
            <person name="Wen G."/>
            <person name="Jones M.C."/>
            <person name="Hurles M.E."/>
            <person name="Andrews T.D."/>
            <person name="Scott C.E."/>
            <person name="Searle S."/>
            <person name="Ramser J."/>
            <person name="Whittaker A."/>
            <person name="Deadman R."/>
            <person name="Carter N.P."/>
            <person name="Hunt S.E."/>
            <person name="Chen R."/>
            <person name="Cree A."/>
            <person name="Gunaratne P."/>
            <person name="Havlak P."/>
            <person name="Hodgson A."/>
            <person name="Metzker M.L."/>
            <person name="Richards S."/>
            <person name="Scott G."/>
            <person name="Steffen D."/>
            <person name="Sodergren E."/>
            <person name="Wheeler D.A."/>
            <person name="Worley K.C."/>
            <person name="Ainscough R."/>
            <person name="Ambrose K.D."/>
            <person name="Ansari-Lari M.A."/>
            <person name="Aradhya S."/>
            <person name="Ashwell R.I."/>
            <person name="Babbage A.K."/>
            <person name="Bagguley C.L."/>
            <person name="Ballabio A."/>
            <person name="Banerjee R."/>
            <person name="Barker G.E."/>
            <person name="Barlow K.F."/>
            <person name="Barrett I.P."/>
            <person name="Bates K.N."/>
            <person name="Beare D.M."/>
            <person name="Beasley H."/>
            <person name="Beasley O."/>
            <person name="Beck A."/>
            <person name="Bethel G."/>
            <person name="Blechschmidt K."/>
            <person name="Brady N."/>
            <person name="Bray-Allen S."/>
            <person name="Bridgeman A.M."/>
            <person name="Brown A.J."/>
            <person name="Brown M.J."/>
            <person name="Bonnin D."/>
            <person name="Bruford E.A."/>
            <person name="Buhay C."/>
            <person name="Burch P."/>
            <person name="Burford D."/>
            <person name="Burgess J."/>
            <person name="Burrill W."/>
            <person name="Burton J."/>
            <person name="Bye J.M."/>
            <person name="Carder C."/>
            <person name="Carrel L."/>
            <person name="Chako J."/>
            <person name="Chapman J.C."/>
            <person name="Chavez D."/>
            <person name="Chen E."/>
            <person name="Chen G."/>
            <person name="Chen Y."/>
            <person name="Chen Z."/>
            <person name="Chinault C."/>
            <person name="Ciccodicola A."/>
            <person name="Clark S.Y."/>
            <person name="Clarke G."/>
            <person name="Clee C.M."/>
            <person name="Clegg S."/>
            <person name="Clerc-Blankenburg K."/>
            <person name="Clifford K."/>
            <person name="Cobley V."/>
            <person name="Cole C.G."/>
            <person name="Conquer J.S."/>
            <person name="Corby N."/>
            <person name="Connor R.E."/>
            <person name="David R."/>
            <person name="Davies J."/>
            <person name="Davis C."/>
            <person name="Davis J."/>
            <person name="Delgado O."/>
            <person name="Deshazo D."/>
            <person name="Dhami P."/>
            <person name="Ding Y."/>
            <person name="Dinh H."/>
            <person name="Dodsworth S."/>
            <person name="Draper H."/>
            <person name="Dugan-Rocha S."/>
            <person name="Dunham A."/>
            <person name="Dunn M."/>
            <person name="Durbin K.J."/>
            <person name="Dutta I."/>
            <person name="Eades T."/>
            <person name="Ellwood M."/>
            <person name="Emery-Cohen A."/>
            <person name="Errington H."/>
            <person name="Evans K.L."/>
            <person name="Faulkner L."/>
            <person name="Francis F."/>
            <person name="Frankland J."/>
            <person name="Fraser A.E."/>
            <person name="Galgoczy P."/>
            <person name="Gilbert J."/>
            <person name="Gill R."/>
            <person name="Gloeckner G."/>
            <person name="Gregory S.G."/>
            <person name="Gribble S."/>
            <person name="Griffiths C."/>
            <person name="Grocock R."/>
            <person name="Gu Y."/>
            <person name="Gwilliam R."/>
            <person name="Hamilton C."/>
            <person name="Hart E.A."/>
            <person name="Hawes A."/>
            <person name="Heath P.D."/>
            <person name="Heitmann K."/>
            <person name="Hennig S."/>
            <person name="Hernandez J."/>
            <person name="Hinzmann B."/>
            <person name="Ho S."/>
            <person name="Hoffs M."/>
            <person name="Howden P.J."/>
            <person name="Huckle E.J."/>
            <person name="Hume J."/>
            <person name="Hunt P.J."/>
            <person name="Hunt A.R."/>
            <person name="Isherwood J."/>
            <person name="Jacob L."/>
            <person name="Johnson D."/>
            <person name="Jones S."/>
            <person name="de Jong P.J."/>
            <person name="Joseph S.S."/>
            <person name="Keenan S."/>
            <person name="Kelly S."/>
            <person name="Kershaw J.K."/>
            <person name="Khan Z."/>
            <person name="Kioschis P."/>
            <person name="Klages S."/>
            <person name="Knights A.J."/>
            <person name="Kosiura A."/>
            <person name="Kovar-Smith C."/>
            <person name="Laird G.K."/>
            <person name="Langford C."/>
            <person name="Lawlor S."/>
            <person name="Leversha M."/>
            <person name="Lewis L."/>
            <person name="Liu W."/>
            <person name="Lloyd C."/>
            <person name="Lloyd D.M."/>
            <person name="Loulseged H."/>
            <person name="Loveland J.E."/>
            <person name="Lovell J.D."/>
            <person name="Lozado R."/>
            <person name="Lu J."/>
            <person name="Lyne R."/>
            <person name="Ma J."/>
            <person name="Maheshwari M."/>
            <person name="Matthews L.H."/>
            <person name="McDowall J."/>
            <person name="McLaren S."/>
            <person name="McMurray A."/>
            <person name="Meidl P."/>
            <person name="Meitinger T."/>
            <person name="Milne S."/>
            <person name="Miner G."/>
            <person name="Mistry S.L."/>
            <person name="Morgan M."/>
            <person name="Morris S."/>
            <person name="Mueller I."/>
            <person name="Mullikin J.C."/>
            <person name="Nguyen N."/>
            <person name="Nordsiek G."/>
            <person name="Nyakatura G."/>
            <person name="O'dell C.N."/>
            <person name="Okwuonu G."/>
            <person name="Palmer S."/>
            <person name="Pandian R."/>
            <person name="Parker D."/>
            <person name="Parrish J."/>
            <person name="Pasternak S."/>
            <person name="Patel D."/>
            <person name="Pearce A.V."/>
            <person name="Pearson D.M."/>
            <person name="Pelan S.E."/>
            <person name="Perez L."/>
            <person name="Porter K.M."/>
            <person name="Ramsey Y."/>
            <person name="Reichwald K."/>
            <person name="Rhodes S."/>
            <person name="Ridler K.A."/>
            <person name="Schlessinger D."/>
            <person name="Schueler M.G."/>
            <person name="Sehra H.K."/>
            <person name="Shaw-Smith C."/>
            <person name="Shen H."/>
            <person name="Sheridan E.M."/>
            <person name="Shownkeen R."/>
            <person name="Skuce C.D."/>
            <person name="Smith M.L."/>
            <person name="Sotheran E.C."/>
            <person name="Steingruber H.E."/>
            <person name="Steward C.A."/>
            <person name="Storey R."/>
            <person name="Swann R.M."/>
            <person name="Swarbreck D."/>
            <person name="Tabor P.E."/>
            <person name="Taudien S."/>
            <person name="Taylor T."/>
            <person name="Teague B."/>
            <person name="Thomas K."/>
            <person name="Thorpe A."/>
            <person name="Timms K."/>
            <person name="Tracey A."/>
            <person name="Trevanion S."/>
            <person name="Tromans A.C."/>
            <person name="d'Urso M."/>
            <person name="Verduzco D."/>
            <person name="Villasana D."/>
            <person name="Waldron L."/>
            <person name="Wall M."/>
            <person name="Wang Q."/>
            <person name="Warren J."/>
            <person name="Warry G.L."/>
            <person name="Wei X."/>
            <person name="West A."/>
            <person name="Whitehead S.L."/>
            <person name="Whiteley M.N."/>
            <person name="Wilkinson J.E."/>
            <person name="Willey D.L."/>
            <person name="Williams G."/>
            <person name="Williams L."/>
            <person name="Williamson A."/>
            <person name="Williamson H."/>
            <person name="Wilming L."/>
            <person name="Woodmansey R.L."/>
            <person name="Wray P.W."/>
            <person name="Yen J."/>
            <person name="Zhang J."/>
            <person name="Zhou J."/>
            <person name="Zoghbi H."/>
            <person name="Zorilla S."/>
            <person name="Buck D."/>
            <person name="Reinhardt R."/>
            <person name="Poustka A."/>
            <person name="Rosenthal A."/>
            <person name="Lehrach H."/>
            <person name="Meindl A."/>
            <person name="Minx P.J."/>
            <person name="Hillier L.W."/>
            <person name="Willard H.F."/>
            <person name="Wilson R.K."/>
            <person name="Waterston R.H."/>
            <person name="Rice C.M."/>
            <person name="Vaudin M."/>
            <person name="Coulson A."/>
            <person name="Nelson D.L."/>
            <person name="Weinstock G."/>
            <person name="Sulston J.E."/>
            <person name="Durbin R.M."/>
            <person name="Hubbard T."/>
            <person name="Gibbs R.A."/>
            <person name="Beck S."/>
            <person name="Rogers J."/>
            <person name="Bentley D.R."/>
        </authorList>
    </citation>
    <scope>NUCLEOTIDE SEQUENCE [LARGE SCALE GENOMIC DNA]</scope>
</reference>
<reference key="4">
    <citation type="submission" date="2005-09" db="EMBL/GenBank/DDBJ databases">
        <authorList>
            <person name="Mural R.J."/>
            <person name="Istrail S."/>
            <person name="Sutton G."/>
            <person name="Florea L."/>
            <person name="Halpern A.L."/>
            <person name="Mobarry C.M."/>
            <person name="Lippert R."/>
            <person name="Walenz B."/>
            <person name="Shatkay H."/>
            <person name="Dew I."/>
            <person name="Miller J.R."/>
            <person name="Flanigan M.J."/>
            <person name="Edwards N.J."/>
            <person name="Bolanos R."/>
            <person name="Fasulo D."/>
            <person name="Halldorsson B.V."/>
            <person name="Hannenhalli S."/>
            <person name="Turner R."/>
            <person name="Yooseph S."/>
            <person name="Lu F."/>
            <person name="Nusskern D.R."/>
            <person name="Shue B.C."/>
            <person name="Zheng X.H."/>
            <person name="Zhong F."/>
            <person name="Delcher A.L."/>
            <person name="Huson D.H."/>
            <person name="Kravitz S.A."/>
            <person name="Mouchard L."/>
            <person name="Reinert K."/>
            <person name="Remington K.A."/>
            <person name="Clark A.G."/>
            <person name="Waterman M.S."/>
            <person name="Eichler E.E."/>
            <person name="Adams M.D."/>
            <person name="Hunkapiller M.W."/>
            <person name="Myers E.W."/>
            <person name="Venter J.C."/>
        </authorList>
    </citation>
    <scope>NUCLEOTIDE SEQUENCE [LARGE SCALE GENOMIC DNA]</scope>
</reference>
<reference key="5">
    <citation type="journal article" date="1997" name="Brain Res. Mol. Brain Res.">
        <title>The class III POU factor Brn-4 interacts with other class III POU factors and the heterogeneous nuclear ribonucleoprotein U.</title>
        <authorList>
            <person name="Malik K.F."/>
            <person name="Jaffe H."/>
            <person name="Brady J."/>
            <person name="Young W.S. III"/>
        </authorList>
    </citation>
    <scope>INTERACTION WITH HNRNPU</scope>
</reference>
<reference key="6">
    <citation type="journal article" date="1995" name="Hum. Mol. Genet.">
        <title>Further mutations in Brain 4 (POU3F4) clarify the phenotype in the X-linked deafness, DFN3.</title>
        <authorList>
            <person name="Bitner-Glindzicz M."/>
            <person name="Turnpenny P."/>
            <person name="Hoeglund P."/>
            <person name="Keaearieainen H."/>
            <person name="Sankila E.-M."/>
            <person name="van der Maarel S.M."/>
            <person name="de Kok Y.J.M."/>
            <person name="Ropers H.-H."/>
            <person name="Cremers F.P.M."/>
            <person name="Pembrey M."/>
            <person name="Malcolm S."/>
        </authorList>
    </citation>
    <scope>VARIANT DFNX2 VAL-312</scope>
</reference>
<reference key="7">
    <citation type="journal article" date="1997" name="Hum. Mutat.">
        <title>The molecular basis of X-linked deafness type 3 (DFN3) in two sporadic cases: identification of a somatic mosaicism for a POU3F4 missense mutation.</title>
        <authorList>
            <person name="de Kok Y.J.M."/>
            <person name="Cremers C.W.R.J."/>
            <person name="Ropers H.-H."/>
            <person name="Cremers F.P.M."/>
        </authorList>
    </citation>
    <scope>VARIANTS DFNX2 GLY-323 AND SER-330</scope>
</reference>
<reference key="8">
    <citation type="journal article" date="1998" name="Laryngoscope">
        <title>A new mutation in the POU3F4 gene in a Japanese family with X-linked mixed deafness (DFN3).</title>
        <authorList>
            <person name="Hagiwara H."/>
            <person name="Tamagawa Y."/>
            <person name="Kitamura K."/>
            <person name="Kodera K."/>
        </authorList>
    </citation>
    <scope>VARIANT DFNX2 201-PHE-LYS-202 DEL</scope>
</reference>
<proteinExistence type="evidence at protein level"/>
<protein>
    <recommendedName>
        <fullName>POU domain, class 3, transcription factor 4</fullName>
    </recommendedName>
    <alternativeName>
        <fullName>Brain-specific homeobox/POU domain protein 4</fullName>
        <shortName>Brain-4</shortName>
        <shortName>Brn-4</shortName>
    </alternativeName>
    <alternativeName>
        <fullName>Octamer-binding protein 9</fullName>
        <shortName>Oct-9</shortName>
    </alternativeName>
    <alternativeName>
        <fullName>Octamer-binding transcription factor 9</fullName>
        <shortName>OTF-9</shortName>
    </alternativeName>
</protein>
<gene>
    <name type="primary">POU3F4</name>
    <name type="synonym">BRN4</name>
    <name type="synonym">OTF9</name>
</gene>
<keyword id="KW-0209">Deafness</keyword>
<keyword id="KW-0225">Disease variant</keyword>
<keyword id="KW-0238">DNA-binding</keyword>
<keyword id="KW-0371">Homeobox</keyword>
<keyword id="KW-1010">Non-syndromic deafness</keyword>
<keyword id="KW-0539">Nucleus</keyword>
<keyword id="KW-0597">Phosphoprotein</keyword>
<keyword id="KW-1267">Proteomics identification</keyword>
<keyword id="KW-1185">Reference proteome</keyword>
<keyword id="KW-0804">Transcription</keyword>
<keyword id="KW-0805">Transcription regulation</keyword>
<dbReference type="EMBL" id="X82324">
    <property type="protein sequence ID" value="CAA57767.1"/>
    <property type="molecule type" value="mRNA"/>
</dbReference>
<dbReference type="EMBL" id="AK314967">
    <property type="protein sequence ID" value="BAG37468.1"/>
    <property type="molecule type" value="mRNA"/>
</dbReference>
<dbReference type="EMBL" id="Z82170">
    <property type="status" value="NOT_ANNOTATED_CDS"/>
    <property type="molecule type" value="Genomic_DNA"/>
</dbReference>
<dbReference type="EMBL" id="CH471104">
    <property type="protein sequence ID" value="EAW98577.1"/>
    <property type="molecule type" value="Genomic_DNA"/>
</dbReference>
<dbReference type="CCDS" id="CCDS14450.1"/>
<dbReference type="PIR" id="A55557">
    <property type="entry name" value="A55557"/>
</dbReference>
<dbReference type="RefSeq" id="NP_000298.3">
    <property type="nucleotide sequence ID" value="NM_000307.4"/>
</dbReference>
<dbReference type="SMR" id="P49335"/>
<dbReference type="BioGRID" id="111452">
    <property type="interactions" value="11"/>
</dbReference>
<dbReference type="FunCoup" id="P49335">
    <property type="interactions" value="184"/>
</dbReference>
<dbReference type="STRING" id="9606.ENSP00000495996"/>
<dbReference type="iPTMnet" id="P49335"/>
<dbReference type="PhosphoSitePlus" id="P49335"/>
<dbReference type="BioMuta" id="POU3F4"/>
<dbReference type="DMDM" id="77416874"/>
<dbReference type="jPOST" id="P49335"/>
<dbReference type="MassIVE" id="P49335"/>
<dbReference type="PaxDb" id="9606-ENSP00000362296"/>
<dbReference type="PeptideAtlas" id="P49335"/>
<dbReference type="ProteomicsDB" id="55990"/>
<dbReference type="DNASU" id="5456"/>
<dbReference type="GeneID" id="5456"/>
<dbReference type="KEGG" id="hsa:5456"/>
<dbReference type="UCSC" id="uc004eeg.3">
    <property type="organism name" value="human"/>
</dbReference>
<dbReference type="AGR" id="HGNC:9217"/>
<dbReference type="CTD" id="5456"/>
<dbReference type="DisGeNET" id="5456"/>
<dbReference type="GeneCards" id="POU3F4"/>
<dbReference type="GeneReviews" id="POU3F4"/>
<dbReference type="HGNC" id="HGNC:9217">
    <property type="gene designation" value="POU3F4"/>
</dbReference>
<dbReference type="MalaCards" id="POU3F4"/>
<dbReference type="MIM" id="300039">
    <property type="type" value="gene"/>
</dbReference>
<dbReference type="MIM" id="304400">
    <property type="type" value="phenotype"/>
</dbReference>
<dbReference type="neXtProt" id="NX_P49335"/>
<dbReference type="Orphanet" id="90641">
    <property type="disease" value="Rare mitochondrial non-syndromic sensorineural deafness"/>
</dbReference>
<dbReference type="Orphanet" id="1435">
    <property type="disease" value="Xq21 microdeletion syndrome"/>
</dbReference>
<dbReference type="PharmGKB" id="PA33541"/>
<dbReference type="eggNOG" id="KOG3802">
    <property type="taxonomic scope" value="Eukaryota"/>
</dbReference>
<dbReference type="HOGENOM" id="CLU_013065_1_2_1"/>
<dbReference type="InParanoid" id="P49335"/>
<dbReference type="OrthoDB" id="6358449at2759"/>
<dbReference type="PAN-GO" id="P49335">
    <property type="GO annotations" value="3 GO annotations based on evolutionary models"/>
</dbReference>
<dbReference type="PhylomeDB" id="P49335"/>
<dbReference type="TreeFam" id="TF316413"/>
<dbReference type="PathwayCommons" id="P49335"/>
<dbReference type="SignaLink" id="P49335"/>
<dbReference type="SIGNOR" id="P49335"/>
<dbReference type="BioGRID-ORCS" id="5456">
    <property type="hits" value="13 hits in 790 CRISPR screens"/>
</dbReference>
<dbReference type="ChiTaRS" id="POU3F4">
    <property type="organism name" value="human"/>
</dbReference>
<dbReference type="GeneWiki" id="POU3F4"/>
<dbReference type="GenomeRNAi" id="5456"/>
<dbReference type="Pharos" id="P49335">
    <property type="development level" value="Tbio"/>
</dbReference>
<dbReference type="PRO" id="PR:P49335"/>
<dbReference type="Proteomes" id="UP000005640">
    <property type="component" value="Unplaced"/>
</dbReference>
<dbReference type="RNAct" id="P49335">
    <property type="molecule type" value="protein"/>
</dbReference>
<dbReference type="GO" id="GO:0000785">
    <property type="term" value="C:chromatin"/>
    <property type="evidence" value="ECO:0000247"/>
    <property type="project" value="NTNU_SB"/>
</dbReference>
<dbReference type="GO" id="GO:0005634">
    <property type="term" value="C:nucleus"/>
    <property type="evidence" value="ECO:0007669"/>
    <property type="project" value="UniProtKB-SubCell"/>
</dbReference>
<dbReference type="GO" id="GO:0003700">
    <property type="term" value="F:DNA-binding transcription factor activity"/>
    <property type="evidence" value="ECO:0000304"/>
    <property type="project" value="ProtInc"/>
</dbReference>
<dbReference type="GO" id="GO:0000981">
    <property type="term" value="F:DNA-binding transcription factor activity, RNA polymerase II-specific"/>
    <property type="evidence" value="ECO:0000247"/>
    <property type="project" value="NTNU_SB"/>
</dbReference>
<dbReference type="GO" id="GO:0000978">
    <property type="term" value="F:RNA polymerase II cis-regulatory region sequence-specific DNA binding"/>
    <property type="evidence" value="ECO:0000318"/>
    <property type="project" value="GO_Central"/>
</dbReference>
<dbReference type="GO" id="GO:1990837">
    <property type="term" value="F:sequence-specific double-stranded DNA binding"/>
    <property type="evidence" value="ECO:0000314"/>
    <property type="project" value="ARUK-UCL"/>
</dbReference>
<dbReference type="GO" id="GO:0007420">
    <property type="term" value="P:brain development"/>
    <property type="evidence" value="ECO:0007669"/>
    <property type="project" value="InterPro"/>
</dbReference>
<dbReference type="GO" id="GO:0090103">
    <property type="term" value="P:cochlea morphogenesis"/>
    <property type="evidence" value="ECO:0000250"/>
    <property type="project" value="UniProtKB"/>
</dbReference>
<dbReference type="GO" id="GO:2001054">
    <property type="term" value="P:negative regulation of mesenchymal cell apoptotic process"/>
    <property type="evidence" value="ECO:0000250"/>
    <property type="project" value="UniProtKB"/>
</dbReference>
<dbReference type="GO" id="GO:0006357">
    <property type="term" value="P:regulation of transcription by RNA polymerase II"/>
    <property type="evidence" value="ECO:0000318"/>
    <property type="project" value="GO_Central"/>
</dbReference>
<dbReference type="GO" id="GO:0007605">
    <property type="term" value="P:sensory perception of sound"/>
    <property type="evidence" value="ECO:0000304"/>
    <property type="project" value="ProtInc"/>
</dbReference>
<dbReference type="CDD" id="cd00086">
    <property type="entry name" value="homeodomain"/>
    <property type="match status" value="1"/>
</dbReference>
<dbReference type="FunFam" id="1.10.10.60:FF:000005">
    <property type="entry name" value="POU domain protein"/>
    <property type="match status" value="1"/>
</dbReference>
<dbReference type="FunFam" id="1.10.260.40:FF:000001">
    <property type="entry name" value="POU domain protein"/>
    <property type="match status" value="1"/>
</dbReference>
<dbReference type="Gene3D" id="1.10.10.60">
    <property type="entry name" value="Homeodomain-like"/>
    <property type="match status" value="1"/>
</dbReference>
<dbReference type="Gene3D" id="1.10.260.40">
    <property type="entry name" value="lambda repressor-like DNA-binding domains"/>
    <property type="match status" value="1"/>
</dbReference>
<dbReference type="InterPro" id="IPR001356">
    <property type="entry name" value="HD"/>
</dbReference>
<dbReference type="InterPro" id="IPR017970">
    <property type="entry name" value="Homeobox_CS"/>
</dbReference>
<dbReference type="InterPro" id="IPR009057">
    <property type="entry name" value="Homeodomain-like_sf"/>
</dbReference>
<dbReference type="InterPro" id="IPR010982">
    <property type="entry name" value="Lambda_DNA-bd_dom_sf"/>
</dbReference>
<dbReference type="InterPro" id="IPR013847">
    <property type="entry name" value="POU"/>
</dbReference>
<dbReference type="InterPro" id="IPR000327">
    <property type="entry name" value="POU_dom"/>
</dbReference>
<dbReference type="InterPro" id="IPR050255">
    <property type="entry name" value="POU_domain_TF"/>
</dbReference>
<dbReference type="InterPro" id="IPR016362">
    <property type="entry name" value="TF_POU_3"/>
</dbReference>
<dbReference type="PANTHER" id="PTHR11636">
    <property type="entry name" value="POU DOMAIN"/>
    <property type="match status" value="1"/>
</dbReference>
<dbReference type="PANTHER" id="PTHR11636:SF83">
    <property type="entry name" value="POU DOMAIN, CLASS 3, TRANSCRIPTION FACTOR 4"/>
    <property type="match status" value="1"/>
</dbReference>
<dbReference type="Pfam" id="PF00046">
    <property type="entry name" value="Homeodomain"/>
    <property type="match status" value="1"/>
</dbReference>
<dbReference type="Pfam" id="PF00157">
    <property type="entry name" value="Pou"/>
    <property type="match status" value="1"/>
</dbReference>
<dbReference type="PIRSF" id="PIRSF002629">
    <property type="entry name" value="Transcription_factor_POU"/>
    <property type="match status" value="1"/>
</dbReference>
<dbReference type="PRINTS" id="PR00028">
    <property type="entry name" value="POUDOMAIN"/>
</dbReference>
<dbReference type="SMART" id="SM00389">
    <property type="entry name" value="HOX"/>
    <property type="match status" value="1"/>
</dbReference>
<dbReference type="SMART" id="SM00352">
    <property type="entry name" value="POU"/>
    <property type="match status" value="1"/>
</dbReference>
<dbReference type="SUPFAM" id="SSF46689">
    <property type="entry name" value="Homeodomain-like"/>
    <property type="match status" value="1"/>
</dbReference>
<dbReference type="SUPFAM" id="SSF47413">
    <property type="entry name" value="lambda repressor-like DNA-binding domains"/>
    <property type="match status" value="1"/>
</dbReference>
<dbReference type="PROSITE" id="PS00027">
    <property type="entry name" value="HOMEOBOX_1"/>
    <property type="match status" value="1"/>
</dbReference>
<dbReference type="PROSITE" id="PS50071">
    <property type="entry name" value="HOMEOBOX_2"/>
    <property type="match status" value="1"/>
</dbReference>
<dbReference type="PROSITE" id="PS00035">
    <property type="entry name" value="POU_1"/>
    <property type="match status" value="1"/>
</dbReference>
<dbReference type="PROSITE" id="PS00465">
    <property type="entry name" value="POU_2"/>
    <property type="match status" value="1"/>
</dbReference>
<dbReference type="PROSITE" id="PS51179">
    <property type="entry name" value="POU_3"/>
    <property type="match status" value="1"/>
</dbReference>
<organism>
    <name type="scientific">Homo sapiens</name>
    <name type="common">Human</name>
    <dbReference type="NCBI Taxonomy" id="9606"/>
    <lineage>
        <taxon>Eukaryota</taxon>
        <taxon>Metazoa</taxon>
        <taxon>Chordata</taxon>
        <taxon>Craniata</taxon>
        <taxon>Vertebrata</taxon>
        <taxon>Euteleostomi</taxon>
        <taxon>Mammalia</taxon>
        <taxon>Eutheria</taxon>
        <taxon>Euarchontoglires</taxon>
        <taxon>Primates</taxon>
        <taxon>Haplorrhini</taxon>
        <taxon>Catarrhini</taxon>
        <taxon>Hominidae</taxon>
        <taxon>Homo</taxon>
    </lineage>
</organism>